<dbReference type="EMBL" id="CP000538">
    <property type="protein sequence ID" value="EAQ72669.1"/>
    <property type="molecule type" value="Genomic_DNA"/>
</dbReference>
<dbReference type="RefSeq" id="WP_002858952.1">
    <property type="nucleotide sequence ID" value="NC_008787.1"/>
</dbReference>
<dbReference type="SMR" id="A1W1L4"/>
<dbReference type="KEGG" id="cjj:CJJ81176_1599"/>
<dbReference type="eggNOG" id="COG0216">
    <property type="taxonomic scope" value="Bacteria"/>
</dbReference>
<dbReference type="HOGENOM" id="CLU_036856_0_1_7"/>
<dbReference type="Proteomes" id="UP000000646">
    <property type="component" value="Chromosome"/>
</dbReference>
<dbReference type="GO" id="GO:0005737">
    <property type="term" value="C:cytoplasm"/>
    <property type="evidence" value="ECO:0007669"/>
    <property type="project" value="UniProtKB-SubCell"/>
</dbReference>
<dbReference type="GO" id="GO:0016149">
    <property type="term" value="F:translation release factor activity, codon specific"/>
    <property type="evidence" value="ECO:0007669"/>
    <property type="project" value="UniProtKB-UniRule"/>
</dbReference>
<dbReference type="FunFam" id="3.30.160.20:FF:000004">
    <property type="entry name" value="Peptide chain release factor 1"/>
    <property type="match status" value="1"/>
</dbReference>
<dbReference type="FunFam" id="3.30.70.1660:FF:000002">
    <property type="entry name" value="Peptide chain release factor 1"/>
    <property type="match status" value="1"/>
</dbReference>
<dbReference type="FunFam" id="3.30.70.1660:FF:000004">
    <property type="entry name" value="Peptide chain release factor 1"/>
    <property type="match status" value="1"/>
</dbReference>
<dbReference type="Gene3D" id="3.30.160.20">
    <property type="match status" value="1"/>
</dbReference>
<dbReference type="Gene3D" id="3.30.70.1660">
    <property type="match status" value="1"/>
</dbReference>
<dbReference type="Gene3D" id="6.10.140.1950">
    <property type="match status" value="1"/>
</dbReference>
<dbReference type="HAMAP" id="MF_00093">
    <property type="entry name" value="Rel_fac_1"/>
    <property type="match status" value="1"/>
</dbReference>
<dbReference type="InterPro" id="IPR005139">
    <property type="entry name" value="PCRF"/>
</dbReference>
<dbReference type="InterPro" id="IPR000352">
    <property type="entry name" value="Pep_chain_release_fac_I"/>
</dbReference>
<dbReference type="InterPro" id="IPR045853">
    <property type="entry name" value="Pep_chain_release_fac_I_sf"/>
</dbReference>
<dbReference type="InterPro" id="IPR050057">
    <property type="entry name" value="Prokaryotic/Mito_RF"/>
</dbReference>
<dbReference type="InterPro" id="IPR004373">
    <property type="entry name" value="RF-1"/>
</dbReference>
<dbReference type="NCBIfam" id="TIGR00019">
    <property type="entry name" value="prfA"/>
    <property type="match status" value="1"/>
</dbReference>
<dbReference type="NCBIfam" id="NF001859">
    <property type="entry name" value="PRK00591.1"/>
    <property type="match status" value="1"/>
</dbReference>
<dbReference type="PANTHER" id="PTHR43804">
    <property type="entry name" value="LD18447P"/>
    <property type="match status" value="1"/>
</dbReference>
<dbReference type="PANTHER" id="PTHR43804:SF7">
    <property type="entry name" value="LD18447P"/>
    <property type="match status" value="1"/>
</dbReference>
<dbReference type="Pfam" id="PF03462">
    <property type="entry name" value="PCRF"/>
    <property type="match status" value="1"/>
</dbReference>
<dbReference type="Pfam" id="PF00472">
    <property type="entry name" value="RF-1"/>
    <property type="match status" value="1"/>
</dbReference>
<dbReference type="SMART" id="SM00937">
    <property type="entry name" value="PCRF"/>
    <property type="match status" value="1"/>
</dbReference>
<dbReference type="SUPFAM" id="SSF75620">
    <property type="entry name" value="Release factor"/>
    <property type="match status" value="1"/>
</dbReference>
<dbReference type="PROSITE" id="PS00745">
    <property type="entry name" value="RF_PROK_I"/>
    <property type="match status" value="1"/>
</dbReference>
<sequence length="355" mass="39909">MLASKLDPFLKRFEELNSLLSSSDILNDISKMTTLSKEQKNLEPIVLKAKEYLKTLDNIEENKALLNDPELGELAKEELKTLEELKPKLEEEIKILLLPKDPNDERNIFLEIRAGTGGDEASLFVGDLVKAYARYAENRGYKLEIVSSSEGSVGGFKEIIMLVKGTGAYSRLKYEGGTHRVQRVPQTESQGRVHTSAITVAVMPEVDDIEIEINPNDLKVDVMRSSGHGGQSVNTTDSAVRITHIPTGIVVVNQDGKSQHKNKESAMKVLKARLYEMQESERLAKESEARKSQVGSGDRSERIRTYNFPQNRISDHRINLTLYRLDAIMQDGLFDEIIEPLITHHQAQALQEQNL</sequence>
<organism>
    <name type="scientific">Campylobacter jejuni subsp. jejuni serotype O:23/36 (strain 81-176)</name>
    <dbReference type="NCBI Taxonomy" id="354242"/>
    <lineage>
        <taxon>Bacteria</taxon>
        <taxon>Pseudomonadati</taxon>
        <taxon>Campylobacterota</taxon>
        <taxon>Epsilonproteobacteria</taxon>
        <taxon>Campylobacterales</taxon>
        <taxon>Campylobacteraceae</taxon>
        <taxon>Campylobacter</taxon>
    </lineage>
</organism>
<keyword id="KW-0963">Cytoplasm</keyword>
<keyword id="KW-0488">Methylation</keyword>
<keyword id="KW-0648">Protein biosynthesis</keyword>
<feature type="chain" id="PRO_1000004876" description="Peptide chain release factor 1">
    <location>
        <begin position="1"/>
        <end position="355"/>
    </location>
</feature>
<feature type="region of interest" description="Disordered" evidence="2">
    <location>
        <begin position="280"/>
        <end position="303"/>
    </location>
</feature>
<feature type="compositionally biased region" description="Basic and acidic residues" evidence="2">
    <location>
        <begin position="280"/>
        <end position="291"/>
    </location>
</feature>
<feature type="modified residue" description="N5-methylglutamine" evidence="1">
    <location>
        <position position="231"/>
    </location>
</feature>
<reference key="1">
    <citation type="submission" date="2006-12" db="EMBL/GenBank/DDBJ databases">
        <authorList>
            <person name="Fouts D.E."/>
            <person name="Nelson K.E."/>
            <person name="Sebastian Y."/>
        </authorList>
    </citation>
    <scope>NUCLEOTIDE SEQUENCE [LARGE SCALE GENOMIC DNA]</scope>
    <source>
        <strain>81-176</strain>
    </source>
</reference>
<name>RF1_CAMJJ</name>
<gene>
    <name evidence="1" type="primary">prfA</name>
    <name type="ordered locus">CJJ81176_1599</name>
</gene>
<comment type="function">
    <text evidence="1">Peptide chain release factor 1 directs the termination of translation in response to the peptide chain termination codons UAG and UAA.</text>
</comment>
<comment type="subcellular location">
    <subcellularLocation>
        <location evidence="1">Cytoplasm</location>
    </subcellularLocation>
</comment>
<comment type="PTM">
    <text evidence="1">Methylated by PrmC. Methylation increases the termination efficiency of RF1.</text>
</comment>
<comment type="similarity">
    <text evidence="1">Belongs to the prokaryotic/mitochondrial release factor family.</text>
</comment>
<accession>A1W1L4</accession>
<proteinExistence type="inferred from homology"/>
<protein>
    <recommendedName>
        <fullName evidence="1">Peptide chain release factor 1</fullName>
        <shortName evidence="1">RF-1</shortName>
    </recommendedName>
</protein>
<evidence type="ECO:0000255" key="1">
    <source>
        <dbReference type="HAMAP-Rule" id="MF_00093"/>
    </source>
</evidence>
<evidence type="ECO:0000256" key="2">
    <source>
        <dbReference type="SAM" id="MobiDB-lite"/>
    </source>
</evidence>